<name>YCB1_SINSX</name>
<accession>P29943</accession>
<dbReference type="EMBL" id="M62869">
    <property type="protein sequence ID" value="AAA25790.1"/>
    <property type="molecule type" value="Genomic_DNA"/>
</dbReference>
<dbReference type="SMR" id="P29943"/>
<dbReference type="GO" id="GO:0016226">
    <property type="term" value="P:iron-sulfur cluster assembly"/>
    <property type="evidence" value="ECO:0007669"/>
    <property type="project" value="TreeGrafter"/>
</dbReference>
<dbReference type="Gene3D" id="3.30.300.90">
    <property type="entry name" value="BolA-like"/>
    <property type="match status" value="1"/>
</dbReference>
<dbReference type="InterPro" id="IPR002634">
    <property type="entry name" value="BolA"/>
</dbReference>
<dbReference type="InterPro" id="IPR036065">
    <property type="entry name" value="BolA-like_sf"/>
</dbReference>
<dbReference type="PANTHER" id="PTHR46230">
    <property type="match status" value="1"/>
</dbReference>
<dbReference type="PANTHER" id="PTHR46230:SF7">
    <property type="entry name" value="BOLA-LIKE PROTEIN 1"/>
    <property type="match status" value="1"/>
</dbReference>
<dbReference type="Pfam" id="PF01722">
    <property type="entry name" value="BolA"/>
    <property type="match status" value="1"/>
</dbReference>
<dbReference type="PIRSF" id="PIRSF003113">
    <property type="entry name" value="BolA"/>
    <property type="match status" value="1"/>
</dbReference>
<dbReference type="SUPFAM" id="SSF82657">
    <property type="entry name" value="BolA-like"/>
    <property type="match status" value="1"/>
</dbReference>
<protein>
    <recommendedName>
        <fullName>Uncharacterized protein in cobS 5'region</fullName>
    </recommendedName>
    <alternativeName>
        <fullName>ORF1</fullName>
    </alternativeName>
</protein>
<feature type="chain" id="PRO_0000201222" description="Uncharacterized protein in cobS 5'region">
    <location>
        <begin position="1"/>
        <end position="93"/>
    </location>
</feature>
<organism>
    <name type="scientific">Sinorhizobium sp</name>
    <dbReference type="NCBI Taxonomy" id="42445"/>
    <lineage>
        <taxon>Bacteria</taxon>
        <taxon>Pseudomonadati</taxon>
        <taxon>Pseudomonadota</taxon>
        <taxon>Alphaproteobacteria</taxon>
        <taxon>Hyphomicrobiales</taxon>
        <taxon>Rhizobiaceae</taxon>
        <taxon>Sinorhizobium/Ensifer group</taxon>
        <taxon>Sinorhizobium</taxon>
    </lineage>
</organism>
<sequence length="93" mass="10286">MSLTETIEKKLIEAFHPERLEVINESHQHTGHQPGFDGTGESHMRVRIVSSAFAGMSRVARHRAINDLLKPELDAGLHALAVEPAAPGEPTRW</sequence>
<evidence type="ECO:0000305" key="1"/>
<proteinExistence type="inferred from homology"/>
<reference key="1">
    <citation type="journal article" date="1991" name="J. Bacteriol.">
        <title>Genetic and sequence analyses of a Pseudomonas denitrificans DNA fragment containing two cob genes.</title>
        <authorList>
            <person name="Cameron B."/>
            <person name="Guilhot C."/>
            <person name="Blanche F."/>
            <person name="Cauchois L."/>
            <person name="Rouyez M.-C."/>
            <person name="Rigault S."/>
            <person name="Levy-Schil S."/>
            <person name="Crouzet J."/>
        </authorList>
    </citation>
    <scope>NUCLEOTIDE SEQUENCE [GENOMIC DNA]</scope>
    <source>
        <strain>SC510</strain>
    </source>
</reference>
<comment type="similarity">
    <text evidence="1">Belongs to the BolA/IbaG family.</text>
</comment>
<comment type="caution">
    <text evidence="1">Was originally thought to originate from Pseudomonas denitrificans, but similarity searches show that the sequence is much closer to Sinorhizobium. The entry's taxonomy has been changed.</text>
</comment>